<reference key="1">
    <citation type="journal article" date="2002" name="Mol. Microbiol.">
        <title>Genome sequence of Streptococcus agalactiae, a pathogen causing invasive neonatal disease.</title>
        <authorList>
            <person name="Glaser P."/>
            <person name="Rusniok C."/>
            <person name="Buchrieser C."/>
            <person name="Chevalier F."/>
            <person name="Frangeul L."/>
            <person name="Msadek T."/>
            <person name="Zouine M."/>
            <person name="Couve E."/>
            <person name="Lalioui L."/>
            <person name="Poyart C."/>
            <person name="Trieu-Cuot P."/>
            <person name="Kunst F."/>
        </authorList>
    </citation>
    <scope>NUCLEOTIDE SEQUENCE [LARGE SCALE GENOMIC DNA]</scope>
    <source>
        <strain>NEM316</strain>
    </source>
</reference>
<gene>
    <name evidence="1" type="primary">coaE</name>
    <name type="ordered locus">gbs1553</name>
</gene>
<protein>
    <recommendedName>
        <fullName evidence="1">Dephospho-CoA kinase</fullName>
        <ecNumber evidence="1">2.7.1.24</ecNumber>
    </recommendedName>
    <alternativeName>
        <fullName evidence="1">Dephosphocoenzyme A kinase</fullName>
    </alternativeName>
</protein>
<comment type="function">
    <text evidence="1">Catalyzes the phosphorylation of the 3'-hydroxyl group of dephosphocoenzyme A to form coenzyme A.</text>
</comment>
<comment type="catalytic activity">
    <reaction evidence="1">
        <text>3'-dephospho-CoA + ATP = ADP + CoA + H(+)</text>
        <dbReference type="Rhea" id="RHEA:18245"/>
        <dbReference type="ChEBI" id="CHEBI:15378"/>
        <dbReference type="ChEBI" id="CHEBI:30616"/>
        <dbReference type="ChEBI" id="CHEBI:57287"/>
        <dbReference type="ChEBI" id="CHEBI:57328"/>
        <dbReference type="ChEBI" id="CHEBI:456216"/>
        <dbReference type="EC" id="2.7.1.24"/>
    </reaction>
</comment>
<comment type="pathway">
    <text evidence="1">Cofactor biosynthesis; coenzyme A biosynthesis; CoA from (R)-pantothenate: step 5/5.</text>
</comment>
<comment type="subcellular location">
    <subcellularLocation>
        <location evidence="1">Cytoplasm</location>
    </subcellularLocation>
</comment>
<comment type="similarity">
    <text evidence="1">Belongs to the CoaE family.</text>
</comment>
<accession>Q8E449</accession>
<feature type="chain" id="PRO_0000173007" description="Dephospho-CoA kinase">
    <location>
        <begin position="1"/>
        <end position="195"/>
    </location>
</feature>
<feature type="domain" description="DPCK" evidence="1">
    <location>
        <begin position="4"/>
        <end position="195"/>
    </location>
</feature>
<feature type="binding site" evidence="1">
    <location>
        <begin position="12"/>
        <end position="17"/>
    </location>
    <ligand>
        <name>ATP</name>
        <dbReference type="ChEBI" id="CHEBI:30616"/>
    </ligand>
</feature>
<name>COAE_STRA3</name>
<keyword id="KW-0067">ATP-binding</keyword>
<keyword id="KW-0173">Coenzyme A biosynthesis</keyword>
<keyword id="KW-0963">Cytoplasm</keyword>
<keyword id="KW-0418">Kinase</keyword>
<keyword id="KW-0547">Nucleotide-binding</keyword>
<keyword id="KW-0808">Transferase</keyword>
<sequence length="195" mass="22385">MTKIIGLTGGIASGKSTVTKIIRESGFKVIDADQVVHKLQAKGGKLYQALLEWLGPEILDADGELDRPKLSQMIFANPDNMKTSARLQNSIIRQELACQRDQLKQTEEIFFVDIPLLIEEKYIKWFDEIWLVFVDKEKQLQRLMARNNYSREEAELRLSHQMPLTDKKSFASLIINNNGDLITLKEQILDALQRL</sequence>
<dbReference type="EC" id="2.7.1.24" evidence="1"/>
<dbReference type="EMBL" id="AL766851">
    <property type="protein sequence ID" value="CAD47212.1"/>
    <property type="molecule type" value="Genomic_DNA"/>
</dbReference>
<dbReference type="SMR" id="Q8E449"/>
<dbReference type="KEGG" id="san:gbs1553"/>
<dbReference type="eggNOG" id="COG0237">
    <property type="taxonomic scope" value="Bacteria"/>
</dbReference>
<dbReference type="HOGENOM" id="CLU_057180_0_0_9"/>
<dbReference type="UniPathway" id="UPA00241">
    <property type="reaction ID" value="UER00356"/>
</dbReference>
<dbReference type="Proteomes" id="UP000000823">
    <property type="component" value="Chromosome"/>
</dbReference>
<dbReference type="GO" id="GO:0005737">
    <property type="term" value="C:cytoplasm"/>
    <property type="evidence" value="ECO:0007669"/>
    <property type="project" value="UniProtKB-SubCell"/>
</dbReference>
<dbReference type="GO" id="GO:0005524">
    <property type="term" value="F:ATP binding"/>
    <property type="evidence" value="ECO:0007669"/>
    <property type="project" value="UniProtKB-UniRule"/>
</dbReference>
<dbReference type="GO" id="GO:0004140">
    <property type="term" value="F:dephospho-CoA kinase activity"/>
    <property type="evidence" value="ECO:0007669"/>
    <property type="project" value="UniProtKB-UniRule"/>
</dbReference>
<dbReference type="GO" id="GO:0015937">
    <property type="term" value="P:coenzyme A biosynthetic process"/>
    <property type="evidence" value="ECO:0007669"/>
    <property type="project" value="UniProtKB-UniRule"/>
</dbReference>
<dbReference type="CDD" id="cd02022">
    <property type="entry name" value="DPCK"/>
    <property type="match status" value="1"/>
</dbReference>
<dbReference type="FunFam" id="3.40.50.300:FF:000991">
    <property type="entry name" value="Dephospho-CoA kinase"/>
    <property type="match status" value="1"/>
</dbReference>
<dbReference type="Gene3D" id="3.40.50.300">
    <property type="entry name" value="P-loop containing nucleotide triphosphate hydrolases"/>
    <property type="match status" value="1"/>
</dbReference>
<dbReference type="HAMAP" id="MF_00376">
    <property type="entry name" value="Dephospho_CoA_kinase"/>
    <property type="match status" value="1"/>
</dbReference>
<dbReference type="InterPro" id="IPR001977">
    <property type="entry name" value="Depp_CoAkinase"/>
</dbReference>
<dbReference type="InterPro" id="IPR027417">
    <property type="entry name" value="P-loop_NTPase"/>
</dbReference>
<dbReference type="NCBIfam" id="TIGR00152">
    <property type="entry name" value="dephospho-CoA kinase"/>
    <property type="match status" value="1"/>
</dbReference>
<dbReference type="PANTHER" id="PTHR10695:SF46">
    <property type="entry name" value="BIFUNCTIONAL COENZYME A SYNTHASE-RELATED"/>
    <property type="match status" value="1"/>
</dbReference>
<dbReference type="PANTHER" id="PTHR10695">
    <property type="entry name" value="DEPHOSPHO-COA KINASE-RELATED"/>
    <property type="match status" value="1"/>
</dbReference>
<dbReference type="Pfam" id="PF01121">
    <property type="entry name" value="CoaE"/>
    <property type="match status" value="1"/>
</dbReference>
<dbReference type="SUPFAM" id="SSF52540">
    <property type="entry name" value="P-loop containing nucleoside triphosphate hydrolases"/>
    <property type="match status" value="1"/>
</dbReference>
<dbReference type="PROSITE" id="PS51219">
    <property type="entry name" value="DPCK"/>
    <property type="match status" value="1"/>
</dbReference>
<proteinExistence type="inferred from homology"/>
<organism>
    <name type="scientific">Streptococcus agalactiae serotype III (strain NEM316)</name>
    <dbReference type="NCBI Taxonomy" id="211110"/>
    <lineage>
        <taxon>Bacteria</taxon>
        <taxon>Bacillati</taxon>
        <taxon>Bacillota</taxon>
        <taxon>Bacilli</taxon>
        <taxon>Lactobacillales</taxon>
        <taxon>Streptococcaceae</taxon>
        <taxon>Streptococcus</taxon>
    </lineage>
</organism>
<evidence type="ECO:0000255" key="1">
    <source>
        <dbReference type="HAMAP-Rule" id="MF_00376"/>
    </source>
</evidence>